<comment type="function">
    <text evidence="1">Catalyzes the complicated ring closure reaction between the two acyclic compounds 1-deoxy-D-xylulose-5-phosphate (DXP) and 3-amino-2-oxopropyl phosphate (1-amino-acetone-3-phosphate or AAP) to form pyridoxine 5'-phosphate (PNP) and inorganic phosphate.</text>
</comment>
<comment type="catalytic activity">
    <reaction evidence="1">
        <text>3-amino-2-oxopropyl phosphate + 1-deoxy-D-xylulose 5-phosphate = pyridoxine 5'-phosphate + phosphate + 2 H2O + H(+)</text>
        <dbReference type="Rhea" id="RHEA:15265"/>
        <dbReference type="ChEBI" id="CHEBI:15377"/>
        <dbReference type="ChEBI" id="CHEBI:15378"/>
        <dbReference type="ChEBI" id="CHEBI:43474"/>
        <dbReference type="ChEBI" id="CHEBI:57279"/>
        <dbReference type="ChEBI" id="CHEBI:57792"/>
        <dbReference type="ChEBI" id="CHEBI:58589"/>
        <dbReference type="EC" id="2.6.99.2"/>
    </reaction>
</comment>
<comment type="pathway">
    <text evidence="1">Cofactor biosynthesis; pyridoxine 5'-phosphate biosynthesis; pyridoxine 5'-phosphate from D-erythrose 4-phosphate: step 5/5.</text>
</comment>
<comment type="subunit">
    <text evidence="1">Homooctamer; tetramer of dimers.</text>
</comment>
<comment type="subcellular location">
    <subcellularLocation>
        <location evidence="1">Cytoplasm</location>
    </subcellularLocation>
</comment>
<comment type="similarity">
    <text evidence="1">Belongs to the PNP synthase family.</text>
</comment>
<keyword id="KW-0963">Cytoplasm</keyword>
<keyword id="KW-0664">Pyridoxine biosynthesis</keyword>
<keyword id="KW-1185">Reference proteome</keyword>
<keyword id="KW-0808">Transferase</keyword>
<accession>Q5FNS2</accession>
<organism>
    <name type="scientific">Gluconobacter oxydans (strain 621H)</name>
    <name type="common">Gluconobacter suboxydans</name>
    <dbReference type="NCBI Taxonomy" id="290633"/>
    <lineage>
        <taxon>Bacteria</taxon>
        <taxon>Pseudomonadati</taxon>
        <taxon>Pseudomonadota</taxon>
        <taxon>Alphaproteobacteria</taxon>
        <taxon>Acetobacterales</taxon>
        <taxon>Acetobacteraceae</taxon>
        <taxon>Gluconobacter</taxon>
    </lineage>
</organism>
<feature type="chain" id="PRO_0000231811" description="Pyridoxine 5'-phosphate synthase">
    <location>
        <begin position="1"/>
        <end position="232"/>
    </location>
</feature>
<feature type="active site" description="Proton acceptor" evidence="1">
    <location>
        <position position="43"/>
    </location>
</feature>
<feature type="active site" description="Proton acceptor" evidence="1">
    <location>
        <position position="69"/>
    </location>
</feature>
<feature type="active site" description="Proton donor" evidence="1">
    <location>
        <position position="185"/>
    </location>
</feature>
<feature type="binding site" evidence="1">
    <location>
        <position position="7"/>
    </location>
    <ligand>
        <name>3-amino-2-oxopropyl phosphate</name>
        <dbReference type="ChEBI" id="CHEBI:57279"/>
    </ligand>
</feature>
<feature type="binding site" evidence="1">
    <location>
        <begin position="9"/>
        <end position="10"/>
    </location>
    <ligand>
        <name>1-deoxy-D-xylulose 5-phosphate</name>
        <dbReference type="ChEBI" id="CHEBI:57792"/>
    </ligand>
</feature>
<feature type="binding site" evidence="1">
    <location>
        <position position="18"/>
    </location>
    <ligand>
        <name>3-amino-2-oxopropyl phosphate</name>
        <dbReference type="ChEBI" id="CHEBI:57279"/>
    </ligand>
</feature>
<feature type="binding site" evidence="1">
    <location>
        <position position="45"/>
    </location>
    <ligand>
        <name>1-deoxy-D-xylulose 5-phosphate</name>
        <dbReference type="ChEBI" id="CHEBI:57792"/>
    </ligand>
</feature>
<feature type="binding site" evidence="1">
    <location>
        <position position="50"/>
    </location>
    <ligand>
        <name>1-deoxy-D-xylulose 5-phosphate</name>
        <dbReference type="ChEBI" id="CHEBI:57792"/>
    </ligand>
</feature>
<feature type="binding site" evidence="1">
    <location>
        <position position="99"/>
    </location>
    <ligand>
        <name>1-deoxy-D-xylulose 5-phosphate</name>
        <dbReference type="ChEBI" id="CHEBI:57792"/>
    </ligand>
</feature>
<feature type="binding site" evidence="1">
    <location>
        <position position="186"/>
    </location>
    <ligand>
        <name>3-amino-2-oxopropyl phosphate</name>
        <dbReference type="ChEBI" id="CHEBI:57279"/>
    </ligand>
</feature>
<feature type="binding site" evidence="1">
    <location>
        <begin position="207"/>
        <end position="208"/>
    </location>
    <ligand>
        <name>3-amino-2-oxopropyl phosphate</name>
        <dbReference type="ChEBI" id="CHEBI:57279"/>
    </ligand>
</feature>
<feature type="site" description="Transition state stabilizer" evidence="1">
    <location>
        <position position="150"/>
    </location>
</feature>
<name>PDXJ_GLUOX</name>
<evidence type="ECO:0000255" key="1">
    <source>
        <dbReference type="HAMAP-Rule" id="MF_00279"/>
    </source>
</evidence>
<dbReference type="EC" id="2.6.99.2" evidence="1"/>
<dbReference type="EMBL" id="CP000009">
    <property type="protein sequence ID" value="AAW61975.1"/>
    <property type="molecule type" value="Genomic_DNA"/>
</dbReference>
<dbReference type="RefSeq" id="WP_011253745.1">
    <property type="nucleotide sequence ID" value="NC_006677.1"/>
</dbReference>
<dbReference type="SMR" id="Q5FNS2"/>
<dbReference type="STRING" id="290633.GOX2241"/>
<dbReference type="KEGG" id="gox:GOX2241"/>
<dbReference type="eggNOG" id="COG0854">
    <property type="taxonomic scope" value="Bacteria"/>
</dbReference>
<dbReference type="HOGENOM" id="CLU_074563_0_0_5"/>
<dbReference type="UniPathway" id="UPA00244">
    <property type="reaction ID" value="UER00313"/>
</dbReference>
<dbReference type="Proteomes" id="UP000006375">
    <property type="component" value="Chromosome"/>
</dbReference>
<dbReference type="GO" id="GO:0005829">
    <property type="term" value="C:cytosol"/>
    <property type="evidence" value="ECO:0007669"/>
    <property type="project" value="TreeGrafter"/>
</dbReference>
<dbReference type="GO" id="GO:0033856">
    <property type="term" value="F:pyridoxine 5'-phosphate synthase activity"/>
    <property type="evidence" value="ECO:0007669"/>
    <property type="project" value="UniProtKB-EC"/>
</dbReference>
<dbReference type="GO" id="GO:0008615">
    <property type="term" value="P:pyridoxine biosynthetic process"/>
    <property type="evidence" value="ECO:0007669"/>
    <property type="project" value="UniProtKB-UniRule"/>
</dbReference>
<dbReference type="CDD" id="cd00003">
    <property type="entry name" value="PNPsynthase"/>
    <property type="match status" value="1"/>
</dbReference>
<dbReference type="Gene3D" id="3.20.20.70">
    <property type="entry name" value="Aldolase class I"/>
    <property type="match status" value="1"/>
</dbReference>
<dbReference type="HAMAP" id="MF_00279">
    <property type="entry name" value="PdxJ"/>
    <property type="match status" value="1"/>
</dbReference>
<dbReference type="InterPro" id="IPR013785">
    <property type="entry name" value="Aldolase_TIM"/>
</dbReference>
<dbReference type="InterPro" id="IPR004569">
    <property type="entry name" value="PyrdxlP_synth_PdxJ"/>
</dbReference>
<dbReference type="InterPro" id="IPR036130">
    <property type="entry name" value="Pyridoxine-5'_phos_synth"/>
</dbReference>
<dbReference type="NCBIfam" id="TIGR00559">
    <property type="entry name" value="pdxJ"/>
    <property type="match status" value="1"/>
</dbReference>
<dbReference type="NCBIfam" id="NF003624">
    <property type="entry name" value="PRK05265.1-2"/>
    <property type="match status" value="1"/>
</dbReference>
<dbReference type="NCBIfam" id="NF003625">
    <property type="entry name" value="PRK05265.1-3"/>
    <property type="match status" value="1"/>
</dbReference>
<dbReference type="NCBIfam" id="NF003627">
    <property type="entry name" value="PRK05265.1-5"/>
    <property type="match status" value="1"/>
</dbReference>
<dbReference type="PANTHER" id="PTHR30456">
    <property type="entry name" value="PYRIDOXINE 5'-PHOSPHATE SYNTHASE"/>
    <property type="match status" value="1"/>
</dbReference>
<dbReference type="PANTHER" id="PTHR30456:SF0">
    <property type="entry name" value="PYRIDOXINE 5'-PHOSPHATE SYNTHASE"/>
    <property type="match status" value="1"/>
</dbReference>
<dbReference type="Pfam" id="PF03740">
    <property type="entry name" value="PdxJ"/>
    <property type="match status" value="1"/>
</dbReference>
<dbReference type="SUPFAM" id="SSF63892">
    <property type="entry name" value="Pyridoxine 5'-phosphate synthase"/>
    <property type="match status" value="1"/>
</dbReference>
<proteinExistence type="inferred from homology"/>
<protein>
    <recommendedName>
        <fullName evidence="1">Pyridoxine 5'-phosphate synthase</fullName>
        <shortName evidence="1">PNP synthase</shortName>
        <ecNumber evidence="1">2.6.99.2</ecNumber>
    </recommendedName>
</protein>
<reference key="1">
    <citation type="journal article" date="2005" name="Nat. Biotechnol.">
        <title>Complete genome sequence of the acetic acid bacterium Gluconobacter oxydans.</title>
        <authorList>
            <person name="Prust C."/>
            <person name="Hoffmeister M."/>
            <person name="Liesegang H."/>
            <person name="Wiezer A."/>
            <person name="Fricke W.F."/>
            <person name="Ehrenreich A."/>
            <person name="Gottschalk G."/>
            <person name="Deppenmeier U."/>
        </authorList>
    </citation>
    <scope>NUCLEOTIDE SEQUENCE [LARGE SCALE GENOMIC DNA]</scope>
    <source>
        <strain>621H</strain>
    </source>
</reference>
<sequence length="232" mass="24562">MIRLGVNIDHVATLRNARGGTFPDPVAAAELAIASGADGITAHLREDRRHIRDADMPRLRALSAPLNFEMAATDEMVRIACDLRPHACCLVPEKRQEVTTEGGLDIVGQSEALKPKIARLRDAGIRVSLFIDPEARQIETAAALGAPVVELHTGAYALGGSEELERLRSAAGTVAACGLELHAGHGLTYDNVGAIADLTGLAELNIGHFLIGQAIFDGLGPVVRKMKSLINS</sequence>
<gene>
    <name evidence="1" type="primary">pdxJ</name>
    <name type="ordered locus">GOX2241</name>
</gene>